<keyword id="KW-0687">Ribonucleoprotein</keyword>
<keyword id="KW-0689">Ribosomal protein</keyword>
<keyword id="KW-0694">RNA-binding</keyword>
<keyword id="KW-0699">rRNA-binding</keyword>
<name>RS7_DESMO</name>
<sequence length="198" mass="22777">MENTGSRELVIKEIKLFNKWSYDFIEVRDPSLKKYICLKPVYLPHTGGRHEHRRFGKTHVPIVERLINKVMRPGRNMGKKHLAYHIVKKAFDIIHIKTGENPIQVLVRAIENAAPREETTRIMYGGITYHVSVDVAPLRRIDLALRHLTEGARMKAFHSPIPIEEALAEEIVLAASNDPKSYAIQKKEEIERIALSSR</sequence>
<reference key="1">
    <citation type="journal article" date="1995" name="Mol. Gen. Genet.">
        <title>Chromosomal organization and nucleotide sequence of the genes for elongation factors EF-1 alpha and EF-2 and ribosomal proteins S7 and S10 of the hyperthermophilic archaeum Desulfurococcus mobilis.</title>
        <authorList>
            <person name="Ceccarelli E."/>
            <person name="Bocchetta M."/>
            <person name="Creti R."/>
            <person name="Sanangelantoni A.M."/>
            <person name="Tiboni O."/>
            <person name="Cammarano P."/>
        </authorList>
    </citation>
    <scope>NUCLEOTIDE SEQUENCE [GENOMIC DNA]</scope>
    <source>
        <strain>ATCC 35582 / DSM 2161 / JCM 9186 / Hvv 3/9</strain>
    </source>
</reference>
<comment type="function">
    <text evidence="1">One of the primary rRNA binding proteins, it binds directly to 16S rRNA where it nucleates assembly of the head domain of the 30S subunit. Is located at the subunit interface close to the decoding center.</text>
</comment>
<comment type="subunit">
    <text>Part of the 30S ribosomal subunit.</text>
</comment>
<comment type="similarity">
    <text evidence="1">Belongs to the universal ribosomal protein uS7 family.</text>
</comment>
<dbReference type="EMBL" id="X73582">
    <property type="protein sequence ID" value="CAA51983.1"/>
    <property type="molecule type" value="Genomic_DNA"/>
</dbReference>
<dbReference type="PIR" id="S54733">
    <property type="entry name" value="S54733"/>
</dbReference>
<dbReference type="SMR" id="P41206"/>
<dbReference type="GO" id="GO:0015935">
    <property type="term" value="C:small ribosomal subunit"/>
    <property type="evidence" value="ECO:0007669"/>
    <property type="project" value="InterPro"/>
</dbReference>
<dbReference type="GO" id="GO:0019843">
    <property type="term" value="F:rRNA binding"/>
    <property type="evidence" value="ECO:0007669"/>
    <property type="project" value="UniProtKB-UniRule"/>
</dbReference>
<dbReference type="GO" id="GO:0003735">
    <property type="term" value="F:structural constituent of ribosome"/>
    <property type="evidence" value="ECO:0007669"/>
    <property type="project" value="InterPro"/>
</dbReference>
<dbReference type="GO" id="GO:0006412">
    <property type="term" value="P:translation"/>
    <property type="evidence" value="ECO:0007669"/>
    <property type="project" value="UniProtKB-UniRule"/>
</dbReference>
<dbReference type="CDD" id="cd14867">
    <property type="entry name" value="uS7_Eukaryote"/>
    <property type="match status" value="1"/>
</dbReference>
<dbReference type="FunFam" id="1.10.455.10:FF:000011">
    <property type="entry name" value="30S ribosomal protein S7"/>
    <property type="match status" value="1"/>
</dbReference>
<dbReference type="Gene3D" id="1.10.455.10">
    <property type="entry name" value="Ribosomal protein S7 domain"/>
    <property type="match status" value="1"/>
</dbReference>
<dbReference type="HAMAP" id="MF_00480_A">
    <property type="entry name" value="Ribosomal_uS7_A"/>
    <property type="match status" value="1"/>
</dbReference>
<dbReference type="InterPro" id="IPR000235">
    <property type="entry name" value="Ribosomal_uS7"/>
</dbReference>
<dbReference type="InterPro" id="IPR026018">
    <property type="entry name" value="Ribosomal_uS7_arc"/>
</dbReference>
<dbReference type="InterPro" id="IPR020606">
    <property type="entry name" value="Ribosomal_uS7_CS"/>
</dbReference>
<dbReference type="InterPro" id="IPR023798">
    <property type="entry name" value="Ribosomal_uS7_dom"/>
</dbReference>
<dbReference type="InterPro" id="IPR036823">
    <property type="entry name" value="Ribosomal_uS7_dom_sf"/>
</dbReference>
<dbReference type="InterPro" id="IPR005716">
    <property type="entry name" value="Ribosomal_uS7_euk/arc"/>
</dbReference>
<dbReference type="NCBIfam" id="NF003106">
    <property type="entry name" value="PRK04027.1"/>
    <property type="match status" value="1"/>
</dbReference>
<dbReference type="NCBIfam" id="TIGR01028">
    <property type="entry name" value="uS7_euk_arch"/>
    <property type="match status" value="1"/>
</dbReference>
<dbReference type="PANTHER" id="PTHR11205">
    <property type="entry name" value="RIBOSOMAL PROTEIN S7"/>
    <property type="match status" value="1"/>
</dbReference>
<dbReference type="Pfam" id="PF00177">
    <property type="entry name" value="Ribosomal_S7"/>
    <property type="match status" value="1"/>
</dbReference>
<dbReference type="PIRSF" id="PIRSF002122">
    <property type="entry name" value="RPS7p_RPS7a_RPS5e_RPS7o"/>
    <property type="match status" value="1"/>
</dbReference>
<dbReference type="SUPFAM" id="SSF47973">
    <property type="entry name" value="Ribosomal protein S7"/>
    <property type="match status" value="1"/>
</dbReference>
<dbReference type="PROSITE" id="PS00052">
    <property type="entry name" value="RIBOSOMAL_S7"/>
    <property type="match status" value="1"/>
</dbReference>
<accession>P41206</accession>
<feature type="chain" id="PRO_0000124393" description="Small ribosomal subunit protein uS7">
    <location>
        <begin position="1"/>
        <end position="198"/>
    </location>
</feature>
<organism>
    <name type="scientific">Desulfurococcus mucosus</name>
    <name type="common">Desulfurococcus mobilis</name>
    <dbReference type="NCBI Taxonomy" id="2275"/>
    <lineage>
        <taxon>Archaea</taxon>
        <taxon>Thermoproteota</taxon>
        <taxon>Thermoprotei</taxon>
        <taxon>Desulfurococcales</taxon>
        <taxon>Desulfurococcaceae</taxon>
        <taxon>Desulfurococcus</taxon>
    </lineage>
</organism>
<protein>
    <recommendedName>
        <fullName evidence="1">Small ribosomal subunit protein uS7</fullName>
    </recommendedName>
    <alternativeName>
        <fullName evidence="2">30S ribosomal protein S7</fullName>
    </alternativeName>
</protein>
<gene>
    <name evidence="1" type="primary">rps7</name>
</gene>
<evidence type="ECO:0000255" key="1">
    <source>
        <dbReference type="HAMAP-Rule" id="MF_00480"/>
    </source>
</evidence>
<evidence type="ECO:0000305" key="2"/>
<proteinExistence type="inferred from homology"/>